<evidence type="ECO:0000255" key="1">
    <source>
        <dbReference type="HAMAP-Rule" id="MF_00099"/>
    </source>
</evidence>
<dbReference type="EC" id="3.1.1.61" evidence="1"/>
<dbReference type="EC" id="3.5.1.44" evidence="1"/>
<dbReference type="EMBL" id="AF044495">
    <property type="protein sequence ID" value="AAC25079.1"/>
    <property type="molecule type" value="Genomic_DNA"/>
</dbReference>
<dbReference type="EMBL" id="AE007869">
    <property type="protein sequence ID" value="AAK86333.1"/>
    <property type="molecule type" value="Genomic_DNA"/>
</dbReference>
<dbReference type="PIR" id="AC2640">
    <property type="entry name" value="AC2640"/>
</dbReference>
<dbReference type="PIR" id="D97422">
    <property type="entry name" value="D97422"/>
</dbReference>
<dbReference type="RefSeq" id="NP_353548.1">
    <property type="nucleotide sequence ID" value="NC_003062.2"/>
</dbReference>
<dbReference type="RefSeq" id="WP_010970952.1">
    <property type="nucleotide sequence ID" value="NC_003062.2"/>
</dbReference>
<dbReference type="SMR" id="O85128"/>
<dbReference type="STRING" id="176299.Atu0519"/>
<dbReference type="EnsemblBacteria" id="AAK86333">
    <property type="protein sequence ID" value="AAK86333"/>
    <property type="gene ID" value="Atu0519"/>
</dbReference>
<dbReference type="GeneID" id="1132557"/>
<dbReference type="KEGG" id="atu:Atu0519"/>
<dbReference type="PATRIC" id="fig|176299.10.peg.516"/>
<dbReference type="eggNOG" id="COG2201">
    <property type="taxonomic scope" value="Bacteria"/>
</dbReference>
<dbReference type="HOGENOM" id="CLU_000445_51_0_5"/>
<dbReference type="OrthoDB" id="9793421at2"/>
<dbReference type="PhylomeDB" id="O85128"/>
<dbReference type="BioCyc" id="AGRO:ATU0519-MONOMER"/>
<dbReference type="Proteomes" id="UP000000813">
    <property type="component" value="Chromosome circular"/>
</dbReference>
<dbReference type="GO" id="GO:0005737">
    <property type="term" value="C:cytoplasm"/>
    <property type="evidence" value="ECO:0007669"/>
    <property type="project" value="UniProtKB-SubCell"/>
</dbReference>
<dbReference type="GO" id="GO:0000156">
    <property type="term" value="F:phosphorelay response regulator activity"/>
    <property type="evidence" value="ECO:0007669"/>
    <property type="project" value="InterPro"/>
</dbReference>
<dbReference type="GO" id="GO:0008984">
    <property type="term" value="F:protein-glutamate methylesterase activity"/>
    <property type="evidence" value="ECO:0007669"/>
    <property type="project" value="UniProtKB-UniRule"/>
</dbReference>
<dbReference type="GO" id="GO:0050568">
    <property type="term" value="F:protein-glutamine glutaminase activity"/>
    <property type="evidence" value="ECO:0007669"/>
    <property type="project" value="UniProtKB-UniRule"/>
</dbReference>
<dbReference type="GO" id="GO:0006935">
    <property type="term" value="P:chemotaxis"/>
    <property type="evidence" value="ECO:0000317"/>
    <property type="project" value="GO_Central"/>
</dbReference>
<dbReference type="CDD" id="cd16432">
    <property type="entry name" value="CheB_Rec"/>
    <property type="match status" value="1"/>
</dbReference>
<dbReference type="CDD" id="cd17541">
    <property type="entry name" value="REC_CheB-like"/>
    <property type="match status" value="1"/>
</dbReference>
<dbReference type="Gene3D" id="3.40.50.2300">
    <property type="match status" value="1"/>
</dbReference>
<dbReference type="Gene3D" id="3.40.50.180">
    <property type="entry name" value="Methylesterase CheB, C-terminal domain"/>
    <property type="match status" value="1"/>
</dbReference>
<dbReference type="HAMAP" id="MF_00099">
    <property type="entry name" value="CheB_chemtxs"/>
    <property type="match status" value="1"/>
</dbReference>
<dbReference type="InterPro" id="IPR008248">
    <property type="entry name" value="CheB-like"/>
</dbReference>
<dbReference type="InterPro" id="IPR035909">
    <property type="entry name" value="CheB_C"/>
</dbReference>
<dbReference type="InterPro" id="IPR011006">
    <property type="entry name" value="CheY-like_superfamily"/>
</dbReference>
<dbReference type="InterPro" id="IPR000673">
    <property type="entry name" value="Sig_transdc_resp-reg_Me-estase"/>
</dbReference>
<dbReference type="InterPro" id="IPR001789">
    <property type="entry name" value="Sig_transdc_resp-reg_receiver"/>
</dbReference>
<dbReference type="NCBIfam" id="NF001965">
    <property type="entry name" value="PRK00742.1"/>
    <property type="match status" value="1"/>
</dbReference>
<dbReference type="NCBIfam" id="NF009206">
    <property type="entry name" value="PRK12555.1"/>
    <property type="match status" value="1"/>
</dbReference>
<dbReference type="PANTHER" id="PTHR42872">
    <property type="entry name" value="PROTEIN-GLUTAMATE METHYLESTERASE/PROTEIN-GLUTAMINE GLUTAMINASE"/>
    <property type="match status" value="1"/>
</dbReference>
<dbReference type="PANTHER" id="PTHR42872:SF6">
    <property type="entry name" value="PROTEIN-GLUTAMATE METHYLESTERASE_PROTEIN-GLUTAMINE GLUTAMINASE"/>
    <property type="match status" value="1"/>
</dbReference>
<dbReference type="Pfam" id="PF01339">
    <property type="entry name" value="CheB_methylest"/>
    <property type="match status" value="1"/>
</dbReference>
<dbReference type="Pfam" id="PF00072">
    <property type="entry name" value="Response_reg"/>
    <property type="match status" value="1"/>
</dbReference>
<dbReference type="PIRSF" id="PIRSF000876">
    <property type="entry name" value="RR_chemtxs_CheB"/>
    <property type="match status" value="1"/>
</dbReference>
<dbReference type="SMART" id="SM00448">
    <property type="entry name" value="REC"/>
    <property type="match status" value="1"/>
</dbReference>
<dbReference type="SUPFAM" id="SSF52172">
    <property type="entry name" value="CheY-like"/>
    <property type="match status" value="1"/>
</dbReference>
<dbReference type="SUPFAM" id="SSF52738">
    <property type="entry name" value="Methylesterase CheB, C-terminal domain"/>
    <property type="match status" value="1"/>
</dbReference>
<dbReference type="PROSITE" id="PS50122">
    <property type="entry name" value="CHEB"/>
    <property type="match status" value="1"/>
</dbReference>
<dbReference type="PROSITE" id="PS50110">
    <property type="entry name" value="RESPONSE_REGULATORY"/>
    <property type="match status" value="1"/>
</dbReference>
<keyword id="KW-0145">Chemotaxis</keyword>
<keyword id="KW-0963">Cytoplasm</keyword>
<keyword id="KW-0378">Hydrolase</keyword>
<keyword id="KW-0597">Phosphoprotein</keyword>
<keyword id="KW-1185">Reference proteome</keyword>
<sequence>MSALARVLVVDDSPTMRGLISAVLKADPEVEVVGQAGNAMEARAAIKQLNPDVVTLDIEMPEMNGLEFLEKIMRLRPMPVIMVSSLTHRGADASLAALEIGAFDCVGKPAPGDARPFGDLADKVKAAARSQHAAYRATRPETAAAPQPVPMSEYRAGRKVVAIGSSTGGVEALIAVLQKFPANCPPTVITQHMPPTFTKSFAERLNRICAPVVEEATDGARLQTGKIYLAPGGERHLQIANRSAPCCRLLDRDPVNGHRPSVDVLFDSVAELAGRNAVGVILTGMGRDGAAGLLKMRHAGARTVGQNEKTCVVYGMPRVAYELGAVEQQLPLASIGEEILKLTTARKEGAD</sequence>
<accession>O85128</accession>
<gene>
    <name evidence="1" type="primary">cheB</name>
    <name type="ordered locus">Atu0519</name>
    <name type="ORF">AGR_C_916</name>
</gene>
<reference key="1">
    <citation type="submission" date="1998-01" db="EMBL/GenBank/DDBJ databases">
        <title>A chemotaxis operon from Agrobacterium tumefaciens.</title>
        <authorList>
            <person name="Wright E.L."/>
            <person name="Deakin W.J."/>
            <person name="Shaw C.H."/>
        </authorList>
    </citation>
    <scope>NUCLEOTIDE SEQUENCE [GENOMIC DNA]</scope>
</reference>
<reference key="2">
    <citation type="journal article" date="2001" name="Science">
        <title>The genome of the natural genetic engineer Agrobacterium tumefaciens C58.</title>
        <authorList>
            <person name="Wood D.W."/>
            <person name="Setubal J.C."/>
            <person name="Kaul R."/>
            <person name="Monks D.E."/>
            <person name="Kitajima J.P."/>
            <person name="Okura V.K."/>
            <person name="Zhou Y."/>
            <person name="Chen L."/>
            <person name="Wood G.E."/>
            <person name="Almeida N.F. Jr."/>
            <person name="Woo L."/>
            <person name="Chen Y."/>
            <person name="Paulsen I.T."/>
            <person name="Eisen J.A."/>
            <person name="Karp P.D."/>
            <person name="Bovee D. Sr."/>
            <person name="Chapman P."/>
            <person name="Clendenning J."/>
            <person name="Deatherage G."/>
            <person name="Gillet W."/>
            <person name="Grant C."/>
            <person name="Kutyavin T."/>
            <person name="Levy R."/>
            <person name="Li M.-J."/>
            <person name="McClelland E."/>
            <person name="Palmieri A."/>
            <person name="Raymond C."/>
            <person name="Rouse G."/>
            <person name="Saenphimmachak C."/>
            <person name="Wu Z."/>
            <person name="Romero P."/>
            <person name="Gordon D."/>
            <person name="Zhang S."/>
            <person name="Yoo H."/>
            <person name="Tao Y."/>
            <person name="Biddle P."/>
            <person name="Jung M."/>
            <person name="Krespan W."/>
            <person name="Perry M."/>
            <person name="Gordon-Kamm B."/>
            <person name="Liao L."/>
            <person name="Kim S."/>
            <person name="Hendrick C."/>
            <person name="Zhao Z.-Y."/>
            <person name="Dolan M."/>
            <person name="Chumley F."/>
            <person name="Tingey S.V."/>
            <person name="Tomb J.-F."/>
            <person name="Gordon M.P."/>
            <person name="Olson M.V."/>
            <person name="Nester E.W."/>
        </authorList>
    </citation>
    <scope>NUCLEOTIDE SEQUENCE [LARGE SCALE GENOMIC DNA]</scope>
    <source>
        <strain>C58 / ATCC 33970</strain>
    </source>
</reference>
<reference key="3">
    <citation type="journal article" date="2001" name="Science">
        <title>Genome sequence of the plant pathogen and biotechnology agent Agrobacterium tumefaciens C58.</title>
        <authorList>
            <person name="Goodner B."/>
            <person name="Hinkle G."/>
            <person name="Gattung S."/>
            <person name="Miller N."/>
            <person name="Blanchard M."/>
            <person name="Qurollo B."/>
            <person name="Goldman B.S."/>
            <person name="Cao Y."/>
            <person name="Askenazi M."/>
            <person name="Halling C."/>
            <person name="Mullin L."/>
            <person name="Houmiel K."/>
            <person name="Gordon J."/>
            <person name="Vaudin M."/>
            <person name="Iartchouk O."/>
            <person name="Epp A."/>
            <person name="Liu F."/>
            <person name="Wollam C."/>
            <person name="Allinger M."/>
            <person name="Doughty D."/>
            <person name="Scott C."/>
            <person name="Lappas C."/>
            <person name="Markelz B."/>
            <person name="Flanagan C."/>
            <person name="Crowell C."/>
            <person name="Gurson J."/>
            <person name="Lomo C."/>
            <person name="Sear C."/>
            <person name="Strub G."/>
            <person name="Cielo C."/>
            <person name="Slater S."/>
        </authorList>
    </citation>
    <scope>NUCLEOTIDE SEQUENCE [LARGE SCALE GENOMIC DNA]</scope>
    <source>
        <strain>C58 / ATCC 33970</strain>
    </source>
</reference>
<protein>
    <recommendedName>
        <fullName evidence="1">Protein-glutamate methylesterase/protein-glutamine glutaminase</fullName>
        <ecNumber evidence="1">3.1.1.61</ecNumber>
        <ecNumber evidence="1">3.5.1.44</ecNumber>
    </recommendedName>
</protein>
<feature type="chain" id="PRO_0000157973" description="Protein-glutamate methylesterase/protein-glutamine glutaminase">
    <location>
        <begin position="1"/>
        <end position="351"/>
    </location>
</feature>
<feature type="domain" description="Response regulatory" evidence="1">
    <location>
        <begin position="6"/>
        <end position="123"/>
    </location>
</feature>
<feature type="domain" description="CheB-type methylesterase" evidence="1">
    <location>
        <begin position="154"/>
        <end position="346"/>
    </location>
</feature>
<feature type="active site" evidence="1">
    <location>
        <position position="166"/>
    </location>
</feature>
<feature type="active site" evidence="1">
    <location>
        <position position="192"/>
    </location>
</feature>
<feature type="active site" evidence="1">
    <location>
        <position position="288"/>
    </location>
</feature>
<feature type="modified residue" description="4-aspartylphosphate" evidence="1">
    <location>
        <position position="57"/>
    </location>
</feature>
<organism>
    <name type="scientific">Agrobacterium fabrum (strain C58 / ATCC 33970)</name>
    <name type="common">Agrobacterium tumefaciens (strain C58)</name>
    <dbReference type="NCBI Taxonomy" id="176299"/>
    <lineage>
        <taxon>Bacteria</taxon>
        <taxon>Pseudomonadati</taxon>
        <taxon>Pseudomonadota</taxon>
        <taxon>Alphaproteobacteria</taxon>
        <taxon>Hyphomicrobiales</taxon>
        <taxon>Rhizobiaceae</taxon>
        <taxon>Rhizobium/Agrobacterium group</taxon>
        <taxon>Agrobacterium</taxon>
        <taxon>Agrobacterium tumefaciens complex</taxon>
    </lineage>
</organism>
<name>CHEB1_AGRFC</name>
<proteinExistence type="inferred from homology"/>
<comment type="function">
    <text evidence="1">Involved in chemotaxis. Part of a chemotaxis signal transduction system that modulates chemotaxis in response to various stimuli. Catalyzes the demethylation of specific methylglutamate residues introduced into the chemoreceptors (methyl-accepting chemotaxis proteins or MCP) by CheR. Also mediates the irreversible deamidation of specific glutamine residues to glutamic acid.</text>
</comment>
<comment type="catalytic activity">
    <reaction evidence="1">
        <text>[protein]-L-glutamate 5-O-methyl ester + H2O = L-glutamyl-[protein] + methanol + H(+)</text>
        <dbReference type="Rhea" id="RHEA:23236"/>
        <dbReference type="Rhea" id="RHEA-COMP:10208"/>
        <dbReference type="Rhea" id="RHEA-COMP:10311"/>
        <dbReference type="ChEBI" id="CHEBI:15377"/>
        <dbReference type="ChEBI" id="CHEBI:15378"/>
        <dbReference type="ChEBI" id="CHEBI:17790"/>
        <dbReference type="ChEBI" id="CHEBI:29973"/>
        <dbReference type="ChEBI" id="CHEBI:82795"/>
        <dbReference type="EC" id="3.1.1.61"/>
    </reaction>
</comment>
<comment type="catalytic activity">
    <reaction evidence="1">
        <text>L-glutaminyl-[protein] + H2O = L-glutamyl-[protein] + NH4(+)</text>
        <dbReference type="Rhea" id="RHEA:16441"/>
        <dbReference type="Rhea" id="RHEA-COMP:10207"/>
        <dbReference type="Rhea" id="RHEA-COMP:10208"/>
        <dbReference type="ChEBI" id="CHEBI:15377"/>
        <dbReference type="ChEBI" id="CHEBI:28938"/>
        <dbReference type="ChEBI" id="CHEBI:29973"/>
        <dbReference type="ChEBI" id="CHEBI:30011"/>
        <dbReference type="EC" id="3.5.1.44"/>
    </reaction>
</comment>
<comment type="subcellular location">
    <subcellularLocation>
        <location evidence="1">Cytoplasm</location>
    </subcellularLocation>
</comment>
<comment type="domain">
    <text evidence="1">Contains a C-terminal catalytic domain, and an N-terminal region which modulates catalytic activity.</text>
</comment>
<comment type="PTM">
    <text evidence="1">Phosphorylated by CheA. Phosphorylation of the N-terminal regulatory domain activates the methylesterase activity.</text>
</comment>
<comment type="similarity">
    <text evidence="1">Belongs to the CheB family.</text>
</comment>